<gene>
    <name type="primary">PARPA-BETA</name>
</gene>
<protein>
    <recommendedName>
        <fullName>Procyclic form-specific polypeptide A-beta</fullName>
    </recommendedName>
    <alternativeName>
        <fullName>PARP A-beta</fullName>
    </alternativeName>
    <alternativeName>
        <fullName>Procyclin</fullName>
    </alternativeName>
</protein>
<feature type="signal peptide" evidence="2">
    <location>
        <begin position="1"/>
        <end position="27"/>
    </location>
</feature>
<feature type="chain" id="PRO_0000022013" description="Procyclic form-specific polypeptide A-beta">
    <location>
        <begin position="28"/>
        <end position="107"/>
    </location>
</feature>
<feature type="propeptide" id="PRO_0000022014">
    <location>
        <begin position="108"/>
        <end position="129"/>
    </location>
</feature>
<feature type="repeat" description="1">
    <location>
        <begin position="59"/>
        <end position="60"/>
    </location>
</feature>
<feature type="repeat" description="2">
    <location>
        <begin position="61"/>
        <end position="62"/>
    </location>
</feature>
<feature type="repeat" description="3">
    <location>
        <begin position="63"/>
        <end position="64"/>
    </location>
</feature>
<feature type="repeat" description="4">
    <location>
        <begin position="65"/>
        <end position="66"/>
    </location>
</feature>
<feature type="repeat" description="5">
    <location>
        <begin position="67"/>
        <end position="68"/>
    </location>
</feature>
<feature type="repeat" description="6">
    <location>
        <begin position="69"/>
        <end position="70"/>
    </location>
</feature>
<feature type="repeat" description="7">
    <location>
        <begin position="71"/>
        <end position="72"/>
    </location>
</feature>
<feature type="repeat" description="8">
    <location>
        <begin position="73"/>
        <end position="74"/>
    </location>
</feature>
<feature type="repeat" description="9">
    <location>
        <begin position="75"/>
        <end position="76"/>
    </location>
</feature>
<feature type="repeat" description="10">
    <location>
        <begin position="77"/>
        <end position="78"/>
    </location>
</feature>
<feature type="repeat" description="11">
    <location>
        <begin position="79"/>
        <end position="80"/>
    </location>
</feature>
<feature type="repeat" description="12">
    <location>
        <begin position="81"/>
        <end position="82"/>
    </location>
</feature>
<feature type="repeat" description="13">
    <location>
        <begin position="83"/>
        <end position="84"/>
    </location>
</feature>
<feature type="repeat" description="14">
    <location>
        <begin position="85"/>
        <end position="86"/>
    </location>
</feature>
<feature type="repeat" description="15">
    <location>
        <begin position="87"/>
        <end position="88"/>
    </location>
</feature>
<feature type="repeat" description="16">
    <location>
        <begin position="89"/>
        <end position="90"/>
    </location>
</feature>
<feature type="repeat" description="17">
    <location>
        <begin position="91"/>
        <end position="92"/>
    </location>
</feature>
<feature type="repeat" description="18">
    <location>
        <begin position="93"/>
        <end position="94"/>
    </location>
</feature>
<feature type="repeat" description="19">
    <location>
        <begin position="95"/>
        <end position="96"/>
    </location>
</feature>
<feature type="repeat" description="20">
    <location>
        <begin position="97"/>
        <end position="98"/>
    </location>
</feature>
<feature type="repeat" description="21">
    <location>
        <begin position="99"/>
        <end position="100"/>
    </location>
</feature>
<feature type="repeat" description="22">
    <location>
        <begin position="101"/>
        <end position="102"/>
    </location>
</feature>
<feature type="repeat" description="23">
    <location>
        <begin position="103"/>
        <end position="104"/>
    </location>
</feature>
<feature type="repeat" description="24">
    <location>
        <begin position="105"/>
        <end position="106"/>
    </location>
</feature>
<feature type="region of interest" description="Disordered" evidence="1">
    <location>
        <begin position="27"/>
        <end position="111"/>
    </location>
</feature>
<feature type="region of interest" description="24 X 2 AA tandem repeats of [DE]-P">
    <location>
        <begin position="59"/>
        <end position="106"/>
    </location>
</feature>
<feature type="compositionally biased region" description="Acidic residues" evidence="1">
    <location>
        <begin position="53"/>
        <end position="104"/>
    </location>
</feature>
<feature type="lipid moiety-binding region" description="GPI-anchor amidated glycine" evidence="2">
    <location>
        <position position="107"/>
    </location>
</feature>
<feature type="glycosylation site" description="N-linked (GlcNAc...) asparagine" evidence="2">
    <location>
        <position position="56"/>
    </location>
</feature>
<accession>P09791</accession>
<reference key="1">
    <citation type="journal article" date="1987" name="Nature">
        <title>Expression of a polypeptide containing a dipeptide repeat is confined to the insect stage of Trypanosoma brucei.</title>
        <authorList>
            <person name="Roditi I."/>
            <person name="Carrington M."/>
            <person name="Turner M."/>
        </authorList>
    </citation>
    <scope>NUCLEOTIDE SEQUENCE [MRNA]</scope>
    <source>
        <strain>427</strain>
    </source>
</reference>
<reference key="2">
    <citation type="journal article" date="1990" name="Mol. Cell. Biol.">
        <title>Transcription of the procyclic acidic repetitive protein genes of Trypanosoma brucei.</title>
        <authorList>
            <person name="Clayton C.E."/>
            <person name="Fueri J.P."/>
            <person name="Itzhaki J.E."/>
            <person name="Bellofatto V."/>
            <person name="Sherman D.R."/>
            <person name="Wisdom G.S."/>
            <person name="Vijayasarathy S."/>
            <person name="Mowatt M.R."/>
        </authorList>
    </citation>
    <scope>NUCLEOTIDE SEQUENCE [GENOMIC DNA]</scope>
</reference>
<reference key="3">
    <citation type="submission" date="1992-06" db="EMBL/GenBank/DDBJ databases">
        <authorList>
            <person name="Vijayasarathy S."/>
            <person name="Ernest I."/>
            <person name="Itzhaki J."/>
            <person name="Sherman D."/>
            <person name="Mowatt M.R."/>
            <person name="Michels P.A.M."/>
            <person name="Clayton C.E."/>
        </authorList>
    </citation>
    <scope>NUCLEOTIDE SEQUENCE</scope>
    <source>
        <strain>427</strain>
    </source>
</reference>
<reference key="4">
    <citation type="journal article" date="1989" name="J. Biol. Chem.">
        <title>The procyclic acidic repetitive proteins of Trypanosoma brucei. Purification and post-translational modification.</title>
        <authorList>
            <person name="Clayton C.E."/>
            <person name="Mowatt M.R."/>
        </authorList>
    </citation>
    <scope>PROTEIN SEQUENCE OF 28-64</scope>
    <scope>GPI-ANCHOR AT GLY-107</scope>
    <scope>GLYCOSYLATION AT ASN-56</scope>
    <source>
        <strain>427</strain>
    </source>
</reference>
<name>PARB_TRYBB</name>
<comment type="function">
    <text>Major surface antigen of procyclic forms.</text>
</comment>
<comment type="subcellular location">
    <subcellularLocation>
        <location>Cell membrane</location>
        <topology>Lipid-anchor</topology>
        <topology>GPI-anchor</topology>
    </subcellularLocation>
</comment>
<comment type="developmental stage">
    <text>Expressed only at a certain stage during differentiation in the insect vector.</text>
</comment>
<evidence type="ECO:0000256" key="1">
    <source>
        <dbReference type="SAM" id="MobiDB-lite"/>
    </source>
</evidence>
<evidence type="ECO:0000269" key="2">
    <source>
    </source>
</evidence>
<sequence length="129" mass="13314">MAPRSLYLLAVLLFSANLFAGVGFAAAAEGPEDKGLTKGGKGKGGKGTKVSDDDTNGTDPDPEPEPEPEPEPEPEPEPEPEPEPEPEPEPEPEPEPEPEPEPEPEPGAATLKSVALPFAIAAVGLVAAF</sequence>
<dbReference type="EMBL" id="X04814">
    <property type="protein sequence ID" value="CAA28503.1"/>
    <property type="molecule type" value="mRNA"/>
</dbReference>
<dbReference type="EMBL" id="M33129">
    <property type="protein sequence ID" value="AAA30225.1"/>
    <property type="molecule type" value="Genomic_DNA"/>
</dbReference>
<dbReference type="EMBL" id="X52584">
    <property type="protein sequence ID" value="CAA36815.1"/>
    <property type="molecule type" value="Genomic_DNA"/>
</dbReference>
<dbReference type="PIR" id="A26036">
    <property type="entry name" value="A26036"/>
</dbReference>
<dbReference type="GlyCosmos" id="P09791">
    <property type="glycosylation" value="1 site, No reported glycans"/>
</dbReference>
<dbReference type="iPTMnet" id="P09791"/>
<dbReference type="GO" id="GO:0005886">
    <property type="term" value="C:plasma membrane"/>
    <property type="evidence" value="ECO:0007669"/>
    <property type="project" value="UniProtKB-SubCell"/>
</dbReference>
<dbReference type="GO" id="GO:0098552">
    <property type="term" value="C:side of membrane"/>
    <property type="evidence" value="ECO:0007669"/>
    <property type="project" value="UniProtKB-KW"/>
</dbReference>
<dbReference type="InterPro" id="IPR008882">
    <property type="entry name" value="Trypano_PARP"/>
</dbReference>
<dbReference type="Pfam" id="PF05887">
    <property type="entry name" value="Trypan_PARP"/>
    <property type="match status" value="1"/>
</dbReference>
<keyword id="KW-1003">Cell membrane</keyword>
<keyword id="KW-0903">Direct protein sequencing</keyword>
<keyword id="KW-0325">Glycoprotein</keyword>
<keyword id="KW-0336">GPI-anchor</keyword>
<keyword id="KW-0449">Lipoprotein</keyword>
<keyword id="KW-0472">Membrane</keyword>
<keyword id="KW-0677">Repeat</keyword>
<keyword id="KW-0732">Signal</keyword>
<proteinExistence type="evidence at protein level"/>
<organism>
    <name type="scientific">Trypanosoma brucei brucei</name>
    <dbReference type="NCBI Taxonomy" id="5702"/>
    <lineage>
        <taxon>Eukaryota</taxon>
        <taxon>Discoba</taxon>
        <taxon>Euglenozoa</taxon>
        <taxon>Kinetoplastea</taxon>
        <taxon>Metakinetoplastina</taxon>
        <taxon>Trypanosomatida</taxon>
        <taxon>Trypanosomatidae</taxon>
        <taxon>Trypanosoma</taxon>
    </lineage>
</organism>